<protein>
    <recommendedName>
        <fullName evidence="3">Siroheme decarboxylase NirH subunit</fullName>
        <ecNumber evidence="1">4.1.1.111</ecNumber>
    </recommendedName>
</protein>
<comment type="function">
    <text evidence="1">Involved in heme d1 biosynthesis. Catalyzes the decarboxylation of siroheme into didecarboxysiroheme (PubMed:21969545). Siroheme is probably decarboxylated to monodecarboxysiroheme, which is in turn decarboxylated to didecarboxysiroheme (PubMed:21969545).</text>
</comment>
<comment type="catalytic activity">
    <reaction evidence="1">
        <text>siroheme + 2 H(+) = 12,18-didecarboxysiroheme + 2 CO2</text>
        <dbReference type="Rhea" id="RHEA:19093"/>
        <dbReference type="ChEBI" id="CHEBI:15378"/>
        <dbReference type="ChEBI" id="CHEBI:16526"/>
        <dbReference type="ChEBI" id="CHEBI:60052"/>
        <dbReference type="ChEBI" id="CHEBI:140497"/>
        <dbReference type="EC" id="4.1.1.111"/>
    </reaction>
</comment>
<comment type="pathway">
    <text evidence="1">Porphyrin-containing compound metabolism.</text>
</comment>
<comment type="subunit">
    <text evidence="1">Forms a complex composed of NirDL, NirG and NirH. All proteins are required for the total conversion of siroheme to didecarboxysiroheme.</text>
</comment>
<comment type="similarity">
    <text evidence="3">Belongs to the Ahb/Nir family.</text>
</comment>
<gene>
    <name evidence="2" type="primary">nirH</name>
</gene>
<dbReference type="EC" id="4.1.1.111" evidence="1"/>
<dbReference type="EMBL" id="JQ922110">
    <property type="protein sequence ID" value="AFM94359.1"/>
    <property type="molecule type" value="Genomic_DNA"/>
</dbReference>
<dbReference type="SMR" id="I6UF18"/>
<dbReference type="BioCyc" id="MetaCyc:MONOMER-18863"/>
<dbReference type="GO" id="GO:0016829">
    <property type="term" value="F:lyase activity"/>
    <property type="evidence" value="ECO:0007669"/>
    <property type="project" value="UniProtKB-KW"/>
</dbReference>
<dbReference type="Gene3D" id="3.30.70.3460">
    <property type="match status" value="1"/>
</dbReference>
<dbReference type="InterPro" id="IPR040523">
    <property type="entry name" value="AsnC_trans_reg2"/>
</dbReference>
<dbReference type="InterPro" id="IPR050684">
    <property type="entry name" value="HTH-Siroheme_Decarb"/>
</dbReference>
<dbReference type="InterPro" id="IPR053953">
    <property type="entry name" value="NirdL-like_HTH"/>
</dbReference>
<dbReference type="PANTHER" id="PTHR43413:SF1">
    <property type="entry name" value="SIROHEME DECARBOXYLASE NIRL SUBUNIT"/>
    <property type="match status" value="1"/>
</dbReference>
<dbReference type="PANTHER" id="PTHR43413">
    <property type="entry name" value="TRANSCRIPTIONAL REGULATOR, ASNC FAMILY"/>
    <property type="match status" value="1"/>
</dbReference>
<dbReference type="Pfam" id="PF17805">
    <property type="entry name" value="AsnC_trans_reg2"/>
    <property type="match status" value="1"/>
</dbReference>
<dbReference type="Pfam" id="PF22451">
    <property type="entry name" value="NirdL-like_HTH"/>
    <property type="match status" value="1"/>
</dbReference>
<proteinExistence type="evidence at protein level"/>
<organism>
    <name type="scientific">Paracoccus pantotrophus</name>
    <name type="common">Thiosphaera pantotropha</name>
    <dbReference type="NCBI Taxonomy" id="82367"/>
    <lineage>
        <taxon>Bacteria</taxon>
        <taxon>Pseudomonadati</taxon>
        <taxon>Pseudomonadota</taxon>
        <taxon>Alphaproteobacteria</taxon>
        <taxon>Rhodobacterales</taxon>
        <taxon>Paracoccaceae</taxon>
        <taxon>Paracoccus</taxon>
    </lineage>
</organism>
<keyword id="KW-0456">Lyase</keyword>
<feature type="chain" id="PRO_0000450517" description="Siroheme decarboxylase NirH subunit">
    <location>
        <begin position="1"/>
        <end position="160"/>
    </location>
</feature>
<reference key="1">
    <citation type="journal article" date="2011" name="Proc. Natl. Acad. Sci. U.S.A.">
        <title>Molecular hijacking of siroheme for the synthesis of heme and d1 heme.</title>
        <authorList>
            <person name="Bali S."/>
            <person name="Lawrence A.D."/>
            <person name="Lobo S.A."/>
            <person name="Saraiva L.M."/>
            <person name="Golding B.T."/>
            <person name="Palmer D.J."/>
            <person name="Howard M.J."/>
            <person name="Ferguson S.J."/>
            <person name="Warren M.J."/>
        </authorList>
    </citation>
    <scope>NUCLEOTIDE SEQUENCE [GENOMIC DNA]</scope>
    <scope>FUNCTION</scope>
    <scope>CATALYTIC ACTIVITY</scope>
    <scope>PATHWAY</scope>
    <scope>SUBUNIT</scope>
    <source>
        <strain>ATCC 35512 / DSM 2944 / CIP 106514 / LMD 82.5 / NBRC 102493 / NCCB 82005 / GB17</strain>
    </source>
</reference>
<evidence type="ECO:0000269" key="1">
    <source>
    </source>
</evidence>
<evidence type="ECO:0000303" key="2">
    <source>
    </source>
</evidence>
<evidence type="ECO:0000305" key="3"/>
<accession>I6UF18</accession>
<name>NIRH_PARPN</name>
<sequence length="160" mass="17634">MTAPDDTDRRLIAATQAGLPLDEAPYARIAAELGLTETQVITRLSILHAQGVIRRIAIAPNHYALGMIANGMSVWDVDDAQAEALGERIGALDFVTHCYLRPRAPVWRYNLFAMLHGQSRAEVEQKRAQVRALLGAACRADDILYSTRILKKTGLRLKDG</sequence>